<keyword id="KW-0446">Lipid-binding</keyword>
<keyword id="KW-0574">Periplasm</keyword>
<keyword id="KW-1185">Reference proteome</keyword>
<keyword id="KW-0732">Signal</keyword>
<keyword id="KW-0804">Transcription</keyword>
<keyword id="KW-0805">Transcription regulation</keyword>
<name>RSEB_ECO57</name>
<reference key="1">
    <citation type="journal article" date="2001" name="Nature">
        <title>Genome sequence of enterohaemorrhagic Escherichia coli O157:H7.</title>
        <authorList>
            <person name="Perna N.T."/>
            <person name="Plunkett G. III"/>
            <person name="Burland V."/>
            <person name="Mau B."/>
            <person name="Glasner J.D."/>
            <person name="Rose D.J."/>
            <person name="Mayhew G.F."/>
            <person name="Evans P.S."/>
            <person name="Gregor J."/>
            <person name="Kirkpatrick H.A."/>
            <person name="Posfai G."/>
            <person name="Hackett J."/>
            <person name="Klink S."/>
            <person name="Boutin A."/>
            <person name="Shao Y."/>
            <person name="Miller L."/>
            <person name="Grotbeck E.J."/>
            <person name="Davis N.W."/>
            <person name="Lim A."/>
            <person name="Dimalanta E.T."/>
            <person name="Potamousis K."/>
            <person name="Apodaca J."/>
            <person name="Anantharaman T.S."/>
            <person name="Lin J."/>
            <person name="Yen G."/>
            <person name="Schwartz D.C."/>
            <person name="Welch R.A."/>
            <person name="Blattner F.R."/>
        </authorList>
    </citation>
    <scope>NUCLEOTIDE SEQUENCE [LARGE SCALE GENOMIC DNA]</scope>
    <source>
        <strain>O157:H7 / EDL933 / ATCC 700927 / EHEC</strain>
    </source>
</reference>
<reference key="2">
    <citation type="journal article" date="2001" name="DNA Res.">
        <title>Complete genome sequence of enterohemorrhagic Escherichia coli O157:H7 and genomic comparison with a laboratory strain K-12.</title>
        <authorList>
            <person name="Hayashi T."/>
            <person name="Makino K."/>
            <person name="Ohnishi M."/>
            <person name="Kurokawa K."/>
            <person name="Ishii K."/>
            <person name="Yokoyama K."/>
            <person name="Han C.-G."/>
            <person name="Ohtsubo E."/>
            <person name="Nakayama K."/>
            <person name="Murata T."/>
            <person name="Tanaka M."/>
            <person name="Tobe T."/>
            <person name="Iida T."/>
            <person name="Takami H."/>
            <person name="Honda T."/>
            <person name="Sasakawa C."/>
            <person name="Ogasawara N."/>
            <person name="Yasunaga T."/>
            <person name="Kuhara S."/>
            <person name="Shiba T."/>
            <person name="Hattori M."/>
            <person name="Shinagawa H."/>
        </authorList>
    </citation>
    <scope>NUCLEOTIDE SEQUENCE [LARGE SCALE GENOMIC DNA]</scope>
    <source>
        <strain>O157:H7 / Sakai / RIMD 0509952 / EHEC</strain>
    </source>
</reference>
<comment type="function">
    <text evidence="1">Negatively modulates the activity of sigma-E (RpoE) by stabilizing RseA under non-stress conditions. Although not essential for association of sigma-E with Rsea it increases their affinity 2- to 3-fold. When bound to RseA it prevents proteolysis by DegS, which is probably relieved by lipopolysaccharide binding (LPS) (By similarity).</text>
</comment>
<comment type="activity regulation">
    <text evidence="1">Binding to RseA is inhibited by LPS fragments; phosphorylated N-acetylglucosamine (GlcNAc) with N-linked acyl chains are minimally necessary to disrupt binding to RseA. Once RseB is no longer bound to RseA the latter is susceptible to DegS degradation. Thus if periplasmic LPS levels increase the sigma-E regulon is induced (By similarity).</text>
</comment>
<comment type="subunit">
    <text evidence="1">Homodimer. Interacts with RseA (By similarity).</text>
</comment>
<comment type="subcellular location">
    <subcellularLocation>
        <location evidence="1">Periplasm</location>
    </subcellularLocation>
    <text evidence="1">Partially associates with the inner membrane via RseA.</text>
</comment>
<comment type="similarity">
    <text evidence="3">Belongs to the RseB family.</text>
</comment>
<feature type="signal peptide" evidence="2">
    <location>
        <begin position="1"/>
        <end position="23"/>
    </location>
</feature>
<feature type="chain" id="PRO_0000045239" description="Sigma-E factor regulatory protein RseB">
    <location>
        <begin position="24"/>
        <end position="318"/>
    </location>
</feature>
<accession>P0AFY0</accession>
<accession>P46186</accession>
<dbReference type="EMBL" id="AE005174">
    <property type="protein sequence ID" value="AAG57687.1"/>
    <property type="molecule type" value="Genomic_DNA"/>
</dbReference>
<dbReference type="EMBL" id="BA000007">
    <property type="protein sequence ID" value="BAB36860.1"/>
    <property type="molecule type" value="Genomic_DNA"/>
</dbReference>
<dbReference type="PIR" id="C85903">
    <property type="entry name" value="C85903"/>
</dbReference>
<dbReference type="PIR" id="E91058">
    <property type="entry name" value="E91058"/>
</dbReference>
<dbReference type="RefSeq" id="NP_311464.1">
    <property type="nucleotide sequence ID" value="NC_002695.1"/>
</dbReference>
<dbReference type="RefSeq" id="WP_000812053.1">
    <property type="nucleotide sequence ID" value="NZ_VOAI01000001.1"/>
</dbReference>
<dbReference type="SMR" id="P0AFY0"/>
<dbReference type="STRING" id="155864.Z3853"/>
<dbReference type="GeneID" id="75206265"/>
<dbReference type="GeneID" id="914893"/>
<dbReference type="KEGG" id="ece:Z3853"/>
<dbReference type="KEGG" id="ecs:ECs_3437"/>
<dbReference type="PATRIC" id="fig|386585.9.peg.3591"/>
<dbReference type="eggNOG" id="COG3026">
    <property type="taxonomic scope" value="Bacteria"/>
</dbReference>
<dbReference type="HOGENOM" id="CLU_054710_1_0_6"/>
<dbReference type="OMA" id="KDDFRYQ"/>
<dbReference type="Proteomes" id="UP000000558">
    <property type="component" value="Chromosome"/>
</dbReference>
<dbReference type="Proteomes" id="UP000002519">
    <property type="component" value="Chromosome"/>
</dbReference>
<dbReference type="GO" id="GO:0030288">
    <property type="term" value="C:outer membrane-bounded periplasmic space"/>
    <property type="evidence" value="ECO:0007669"/>
    <property type="project" value="TreeGrafter"/>
</dbReference>
<dbReference type="GO" id="GO:0045152">
    <property type="term" value="F:antisigma factor binding"/>
    <property type="evidence" value="ECO:0007669"/>
    <property type="project" value="TreeGrafter"/>
</dbReference>
<dbReference type="GO" id="GO:0008289">
    <property type="term" value="F:lipid binding"/>
    <property type="evidence" value="ECO:0007669"/>
    <property type="project" value="UniProtKB-KW"/>
</dbReference>
<dbReference type="GO" id="GO:0032885">
    <property type="term" value="P:regulation of polysaccharide biosynthetic process"/>
    <property type="evidence" value="ECO:0007669"/>
    <property type="project" value="TreeGrafter"/>
</dbReference>
<dbReference type="CDD" id="cd16327">
    <property type="entry name" value="RseB"/>
    <property type="match status" value="1"/>
</dbReference>
<dbReference type="FunFam" id="2.50.20.10:FF:000003">
    <property type="entry name" value="Sigma-E factor regulatory protein RseB"/>
    <property type="match status" value="1"/>
</dbReference>
<dbReference type="FunFam" id="3.30.200.100:FF:000001">
    <property type="entry name" value="Sigma-E factor regulatory protein RseB"/>
    <property type="match status" value="1"/>
</dbReference>
<dbReference type="Gene3D" id="2.50.20.10">
    <property type="entry name" value="Lipoprotein localisation LolA/LolB/LppX"/>
    <property type="match status" value="1"/>
</dbReference>
<dbReference type="Gene3D" id="3.30.200.100">
    <property type="entry name" value="MucB/RseB, C-terminal domain"/>
    <property type="match status" value="1"/>
</dbReference>
<dbReference type="InterPro" id="IPR033436">
    <property type="entry name" value="MucB/RseB_C"/>
</dbReference>
<dbReference type="InterPro" id="IPR038484">
    <property type="entry name" value="MucB/RseB_C_sf"/>
</dbReference>
<dbReference type="InterPro" id="IPR033434">
    <property type="entry name" value="MucB/RseB_N"/>
</dbReference>
<dbReference type="InterPro" id="IPR005588">
    <property type="entry name" value="MucB_RseB"/>
</dbReference>
<dbReference type="NCBIfam" id="NF006990">
    <property type="entry name" value="PRK09455.1"/>
    <property type="match status" value="1"/>
</dbReference>
<dbReference type="PANTHER" id="PTHR38782">
    <property type="match status" value="1"/>
</dbReference>
<dbReference type="PANTHER" id="PTHR38782:SF1">
    <property type="entry name" value="SIGMA-E FACTOR REGULATORY PROTEIN RSEB"/>
    <property type="match status" value="1"/>
</dbReference>
<dbReference type="Pfam" id="PF03888">
    <property type="entry name" value="MucB_RseB"/>
    <property type="match status" value="1"/>
</dbReference>
<dbReference type="Pfam" id="PF17188">
    <property type="entry name" value="MucB_RseB_C"/>
    <property type="match status" value="1"/>
</dbReference>
<dbReference type="PIRSF" id="PIRSF005427">
    <property type="entry name" value="RseB"/>
    <property type="match status" value="1"/>
</dbReference>
<sequence length="318" mass="35750">MKQLWFAMSLVTGSLLFSANASATPASGALLQQMNLASQSLNYELSFISINKQGVESLRYRHARLDNRPLAQLLQMDGPRREVVQRGNEISYFEPGLEPFTLNGDYIVDSLPSLIYTDFKRLSPYYDFISVGRTRIADRLCEVIRVVARDGTRYSYIVWMDTESKLPMRVDLLDRDGETLEQFRVIAFNVNQDISSSMQTLAKANLPPLLSVPVGEKAKFSWTPTWLPQGFSEVSSSRRPLPTMDNMPIESRLYSDGLFSFSVNVNRATPSSTDQMLRTGRRTVSTSVRDNAEITIVGELPPQTAKRIAENIKFGAAQ</sequence>
<evidence type="ECO:0000250" key="1"/>
<evidence type="ECO:0000255" key="2"/>
<evidence type="ECO:0000305" key="3"/>
<protein>
    <recommendedName>
        <fullName>Sigma-E factor regulatory protein RseB</fullName>
    </recommendedName>
</protein>
<organism>
    <name type="scientific">Escherichia coli O157:H7</name>
    <dbReference type="NCBI Taxonomy" id="83334"/>
    <lineage>
        <taxon>Bacteria</taxon>
        <taxon>Pseudomonadati</taxon>
        <taxon>Pseudomonadota</taxon>
        <taxon>Gammaproteobacteria</taxon>
        <taxon>Enterobacterales</taxon>
        <taxon>Enterobacteriaceae</taxon>
        <taxon>Escherichia</taxon>
    </lineage>
</organism>
<proteinExistence type="inferred from homology"/>
<gene>
    <name type="primary">rseB</name>
    <name type="ordered locus">Z3853</name>
    <name type="ordered locus">ECs3437</name>
</gene>